<dbReference type="EMBL" id="AP008971">
    <property type="protein sequence ID" value="BAG07592.1"/>
    <property type="molecule type" value="Genomic_DNA"/>
</dbReference>
<dbReference type="RefSeq" id="WP_002840173.1">
    <property type="nucleotide sequence ID" value="NC_010376.1"/>
</dbReference>
<dbReference type="SMR" id="B0RZS8"/>
<dbReference type="STRING" id="334413.FMG_0174"/>
<dbReference type="KEGG" id="fma:FMG_0174"/>
<dbReference type="eggNOG" id="COG0200">
    <property type="taxonomic scope" value="Bacteria"/>
</dbReference>
<dbReference type="HOGENOM" id="CLU_055188_4_2_9"/>
<dbReference type="Proteomes" id="UP000001319">
    <property type="component" value="Chromosome"/>
</dbReference>
<dbReference type="GO" id="GO:0022625">
    <property type="term" value="C:cytosolic large ribosomal subunit"/>
    <property type="evidence" value="ECO:0007669"/>
    <property type="project" value="TreeGrafter"/>
</dbReference>
<dbReference type="GO" id="GO:0019843">
    <property type="term" value="F:rRNA binding"/>
    <property type="evidence" value="ECO:0007669"/>
    <property type="project" value="UniProtKB-UniRule"/>
</dbReference>
<dbReference type="GO" id="GO:0003735">
    <property type="term" value="F:structural constituent of ribosome"/>
    <property type="evidence" value="ECO:0007669"/>
    <property type="project" value="InterPro"/>
</dbReference>
<dbReference type="GO" id="GO:0006412">
    <property type="term" value="P:translation"/>
    <property type="evidence" value="ECO:0007669"/>
    <property type="project" value="UniProtKB-UniRule"/>
</dbReference>
<dbReference type="Gene3D" id="3.100.10.10">
    <property type="match status" value="1"/>
</dbReference>
<dbReference type="HAMAP" id="MF_01341">
    <property type="entry name" value="Ribosomal_uL15"/>
    <property type="match status" value="1"/>
</dbReference>
<dbReference type="InterPro" id="IPR030878">
    <property type="entry name" value="Ribosomal_uL15"/>
</dbReference>
<dbReference type="InterPro" id="IPR021131">
    <property type="entry name" value="Ribosomal_uL15/eL18"/>
</dbReference>
<dbReference type="InterPro" id="IPR036227">
    <property type="entry name" value="Ribosomal_uL15/eL18_sf"/>
</dbReference>
<dbReference type="InterPro" id="IPR005749">
    <property type="entry name" value="Ribosomal_uL15_bac-type"/>
</dbReference>
<dbReference type="InterPro" id="IPR001196">
    <property type="entry name" value="Ribosomal_uL15_CS"/>
</dbReference>
<dbReference type="NCBIfam" id="TIGR01071">
    <property type="entry name" value="rplO_bact"/>
    <property type="match status" value="1"/>
</dbReference>
<dbReference type="PANTHER" id="PTHR12934">
    <property type="entry name" value="50S RIBOSOMAL PROTEIN L15"/>
    <property type="match status" value="1"/>
</dbReference>
<dbReference type="PANTHER" id="PTHR12934:SF11">
    <property type="entry name" value="LARGE RIBOSOMAL SUBUNIT PROTEIN UL15M"/>
    <property type="match status" value="1"/>
</dbReference>
<dbReference type="Pfam" id="PF00828">
    <property type="entry name" value="Ribosomal_L27A"/>
    <property type="match status" value="1"/>
</dbReference>
<dbReference type="SUPFAM" id="SSF52080">
    <property type="entry name" value="Ribosomal proteins L15p and L18e"/>
    <property type="match status" value="1"/>
</dbReference>
<dbReference type="PROSITE" id="PS00475">
    <property type="entry name" value="RIBOSOMAL_L15"/>
    <property type="match status" value="1"/>
</dbReference>
<comment type="function">
    <text evidence="1">Binds to the 23S rRNA.</text>
</comment>
<comment type="subunit">
    <text evidence="1">Part of the 50S ribosomal subunit.</text>
</comment>
<comment type="similarity">
    <text evidence="1">Belongs to the universal ribosomal protein uL15 family.</text>
</comment>
<gene>
    <name evidence="1" type="primary">rplO</name>
    <name type="ordered locus">FMG_0174</name>
</gene>
<evidence type="ECO:0000255" key="1">
    <source>
        <dbReference type="HAMAP-Rule" id="MF_01341"/>
    </source>
</evidence>
<evidence type="ECO:0000256" key="2">
    <source>
        <dbReference type="SAM" id="MobiDB-lite"/>
    </source>
</evidence>
<evidence type="ECO:0000305" key="3"/>
<name>RL15_FINM2</name>
<organism>
    <name type="scientific">Finegoldia magna (strain ATCC 29328 / DSM 20472 / WAL 2508)</name>
    <name type="common">Peptostreptococcus magnus</name>
    <dbReference type="NCBI Taxonomy" id="334413"/>
    <lineage>
        <taxon>Bacteria</taxon>
        <taxon>Bacillati</taxon>
        <taxon>Bacillota</taxon>
        <taxon>Tissierellia</taxon>
        <taxon>Tissierellales</taxon>
        <taxon>Peptoniphilaceae</taxon>
        <taxon>Finegoldia</taxon>
    </lineage>
</organism>
<sequence length="149" mass="16192">MKLHNLRPAKGGEVKARKRVGRGYGSGLGHNAGRGRDGQNSRSGGGVRPGFEGGQMPLFRRLPKRGFKNHFAKQYAEINIRDLNCFEDGEEITPEILANAGFFKPAKAKDGVKILGDGEITKKLTIKANKFTKSAEEKITKAGGKVEVI</sequence>
<feature type="chain" id="PRO_1000142822" description="Large ribosomal subunit protein uL15">
    <location>
        <begin position="1"/>
        <end position="149"/>
    </location>
</feature>
<feature type="region of interest" description="Disordered" evidence="2">
    <location>
        <begin position="1"/>
        <end position="58"/>
    </location>
</feature>
<feature type="compositionally biased region" description="Gly residues" evidence="2">
    <location>
        <begin position="22"/>
        <end position="32"/>
    </location>
</feature>
<feature type="compositionally biased region" description="Gly residues" evidence="2">
    <location>
        <begin position="43"/>
        <end position="53"/>
    </location>
</feature>
<accession>B0RZS8</accession>
<proteinExistence type="inferred from homology"/>
<protein>
    <recommendedName>
        <fullName evidence="1">Large ribosomal subunit protein uL15</fullName>
    </recommendedName>
    <alternativeName>
        <fullName evidence="3">50S ribosomal protein L15</fullName>
    </alternativeName>
</protein>
<keyword id="KW-1185">Reference proteome</keyword>
<keyword id="KW-0687">Ribonucleoprotein</keyword>
<keyword id="KW-0689">Ribosomal protein</keyword>
<keyword id="KW-0694">RNA-binding</keyword>
<keyword id="KW-0699">rRNA-binding</keyword>
<reference key="1">
    <citation type="journal article" date="2008" name="DNA Res.">
        <title>Complete genome sequence of Finegoldia magna, an anaerobic opportunistic pathogen.</title>
        <authorList>
            <person name="Goto T."/>
            <person name="Yamashita A."/>
            <person name="Hirakawa H."/>
            <person name="Matsutani M."/>
            <person name="Todo K."/>
            <person name="Ohshima K."/>
            <person name="Toh H."/>
            <person name="Miyamoto K."/>
            <person name="Kuhara S."/>
            <person name="Hattori M."/>
            <person name="Shimizu T."/>
            <person name="Akimoto S."/>
        </authorList>
    </citation>
    <scope>NUCLEOTIDE SEQUENCE [LARGE SCALE GENOMIC DNA]</scope>
    <source>
        <strain>ATCC 29328 / DSM 20472 / WAL 2508</strain>
    </source>
</reference>